<dbReference type="EMBL" id="CP000853">
    <property type="protein sequence ID" value="ABW18982.1"/>
    <property type="molecule type" value="Genomic_DNA"/>
</dbReference>
<dbReference type="RefSeq" id="WP_012159294.1">
    <property type="nucleotide sequence ID" value="NC_009922.1"/>
</dbReference>
<dbReference type="SMR" id="A8MH95"/>
<dbReference type="STRING" id="350688.Clos_1438"/>
<dbReference type="KEGG" id="aoe:Clos_1438"/>
<dbReference type="eggNOG" id="COG0227">
    <property type="taxonomic scope" value="Bacteria"/>
</dbReference>
<dbReference type="HOGENOM" id="CLU_064548_7_0_9"/>
<dbReference type="OrthoDB" id="9805609at2"/>
<dbReference type="Proteomes" id="UP000000269">
    <property type="component" value="Chromosome"/>
</dbReference>
<dbReference type="GO" id="GO:1990904">
    <property type="term" value="C:ribonucleoprotein complex"/>
    <property type="evidence" value="ECO:0007669"/>
    <property type="project" value="UniProtKB-KW"/>
</dbReference>
<dbReference type="GO" id="GO:0005840">
    <property type="term" value="C:ribosome"/>
    <property type="evidence" value="ECO:0007669"/>
    <property type="project" value="UniProtKB-KW"/>
</dbReference>
<dbReference type="GO" id="GO:0003735">
    <property type="term" value="F:structural constituent of ribosome"/>
    <property type="evidence" value="ECO:0007669"/>
    <property type="project" value="InterPro"/>
</dbReference>
<dbReference type="GO" id="GO:0006412">
    <property type="term" value="P:translation"/>
    <property type="evidence" value="ECO:0007669"/>
    <property type="project" value="UniProtKB-UniRule"/>
</dbReference>
<dbReference type="Gene3D" id="2.30.170.40">
    <property type="entry name" value="Ribosomal protein L28/L24"/>
    <property type="match status" value="1"/>
</dbReference>
<dbReference type="HAMAP" id="MF_00373">
    <property type="entry name" value="Ribosomal_bL28"/>
    <property type="match status" value="1"/>
</dbReference>
<dbReference type="InterPro" id="IPR050096">
    <property type="entry name" value="Bacterial_rp_bL28"/>
</dbReference>
<dbReference type="InterPro" id="IPR026569">
    <property type="entry name" value="Ribosomal_bL28"/>
</dbReference>
<dbReference type="InterPro" id="IPR034704">
    <property type="entry name" value="Ribosomal_bL28/bL31-like_sf"/>
</dbReference>
<dbReference type="InterPro" id="IPR001383">
    <property type="entry name" value="Ribosomal_bL28_bact-type"/>
</dbReference>
<dbReference type="InterPro" id="IPR037147">
    <property type="entry name" value="Ribosomal_bL28_sf"/>
</dbReference>
<dbReference type="NCBIfam" id="TIGR00009">
    <property type="entry name" value="L28"/>
    <property type="match status" value="1"/>
</dbReference>
<dbReference type="PANTHER" id="PTHR39080">
    <property type="entry name" value="50S RIBOSOMAL PROTEIN L28"/>
    <property type="match status" value="1"/>
</dbReference>
<dbReference type="PANTHER" id="PTHR39080:SF1">
    <property type="entry name" value="LARGE RIBOSOMAL SUBUNIT PROTEIN BL28A"/>
    <property type="match status" value="1"/>
</dbReference>
<dbReference type="Pfam" id="PF00830">
    <property type="entry name" value="Ribosomal_L28"/>
    <property type="match status" value="1"/>
</dbReference>
<dbReference type="SUPFAM" id="SSF143800">
    <property type="entry name" value="L28p-like"/>
    <property type="match status" value="1"/>
</dbReference>
<protein>
    <recommendedName>
        <fullName evidence="1">Large ribosomal subunit protein bL28</fullName>
    </recommendedName>
    <alternativeName>
        <fullName evidence="2">50S ribosomal protein L28</fullName>
    </alternativeName>
</protein>
<keyword id="KW-1185">Reference proteome</keyword>
<keyword id="KW-0687">Ribonucleoprotein</keyword>
<keyword id="KW-0689">Ribosomal protein</keyword>
<sequence>MARVCEVCAKGKVSGNVVSHSNRHNRRTWEPNLRRVRAIVNGTAKRINVCTRCLRSGRVERAL</sequence>
<evidence type="ECO:0000255" key="1">
    <source>
        <dbReference type="HAMAP-Rule" id="MF_00373"/>
    </source>
</evidence>
<evidence type="ECO:0000305" key="2"/>
<organism>
    <name type="scientific">Alkaliphilus oremlandii (strain OhILAs)</name>
    <name type="common">Clostridium oremlandii (strain OhILAs)</name>
    <dbReference type="NCBI Taxonomy" id="350688"/>
    <lineage>
        <taxon>Bacteria</taxon>
        <taxon>Bacillati</taxon>
        <taxon>Bacillota</taxon>
        <taxon>Clostridia</taxon>
        <taxon>Peptostreptococcales</taxon>
        <taxon>Natronincolaceae</taxon>
        <taxon>Alkaliphilus</taxon>
    </lineage>
</organism>
<comment type="similarity">
    <text evidence="1">Belongs to the bacterial ribosomal protein bL28 family.</text>
</comment>
<gene>
    <name evidence="1" type="primary">rpmB</name>
    <name type="ordered locus">Clos_1438</name>
</gene>
<name>RL28_ALKOO</name>
<proteinExistence type="inferred from homology"/>
<reference key="1">
    <citation type="submission" date="2007-10" db="EMBL/GenBank/DDBJ databases">
        <title>Complete genome of Alkaliphilus oremlandii OhILAs.</title>
        <authorList>
            <person name="Copeland A."/>
            <person name="Lucas S."/>
            <person name="Lapidus A."/>
            <person name="Barry K."/>
            <person name="Detter J.C."/>
            <person name="Glavina del Rio T."/>
            <person name="Hammon N."/>
            <person name="Israni S."/>
            <person name="Dalin E."/>
            <person name="Tice H."/>
            <person name="Pitluck S."/>
            <person name="Chain P."/>
            <person name="Malfatti S."/>
            <person name="Shin M."/>
            <person name="Vergez L."/>
            <person name="Schmutz J."/>
            <person name="Larimer F."/>
            <person name="Land M."/>
            <person name="Hauser L."/>
            <person name="Kyrpides N."/>
            <person name="Mikhailova N."/>
            <person name="Stolz J.F."/>
            <person name="Dawson A."/>
            <person name="Fisher E."/>
            <person name="Crable B."/>
            <person name="Perera E."/>
            <person name="Lisak J."/>
            <person name="Ranganathan M."/>
            <person name="Basu P."/>
            <person name="Richardson P."/>
        </authorList>
    </citation>
    <scope>NUCLEOTIDE SEQUENCE [LARGE SCALE GENOMIC DNA]</scope>
    <source>
        <strain>OhILAs</strain>
    </source>
</reference>
<accession>A8MH95</accession>
<feature type="chain" id="PRO_1000059946" description="Large ribosomal subunit protein bL28">
    <location>
        <begin position="1"/>
        <end position="63"/>
    </location>
</feature>